<feature type="chain" id="PRO_0000186996" description="Uncharacterized protein aq_aa25">
    <location>
        <begin position="1"/>
        <end position="206"/>
    </location>
</feature>
<sequence>MRKLKKEQREALEKVVSLGICNDFYLAGGTALLIRYGHRFSDDFDFFTFPEKPFDSFSISRQIDKLSRVRWLYQSKDTLIFLLDGIKFSFFEYRYPLLENPEKNNDLGIFIAGDKDIACMKAVAIAQRGSKKDFYDLWFLMRKHGWDLKELEKLVKKKYRNIDFSIIVKSLVYFEDAREEVYEDIEPYWEEVEEFFKRKVKEYLEN</sequence>
<proteinExistence type="predicted"/>
<geneLocation type="plasmid">
    <name>ece1</name>
</geneLocation>
<keyword id="KW-0614">Plasmid</keyword>
<keyword id="KW-1185">Reference proteome</keyword>
<gene>
    <name type="ordered locus">aq_aa25</name>
</gene>
<name>YZ25_AQUAE</name>
<protein>
    <recommendedName>
        <fullName>Uncharacterized protein aq_aa25</fullName>
    </recommendedName>
</protein>
<dbReference type="EMBL" id="AE000667">
    <property type="protein sequence ID" value="AAC07968.1"/>
    <property type="molecule type" value="Genomic_DNA"/>
</dbReference>
<dbReference type="RefSeq" id="NP_046416.1">
    <property type="nucleotide sequence ID" value="NC_001880.1"/>
</dbReference>
<dbReference type="RefSeq" id="WP_010890562.1">
    <property type="nucleotide sequence ID" value="NC_001880.1"/>
</dbReference>
<dbReference type="SMR" id="O66416"/>
<dbReference type="EnsemblBacteria" id="AAC07968">
    <property type="protein sequence ID" value="AAC07968"/>
    <property type="gene ID" value="aq_aa25"/>
</dbReference>
<dbReference type="KEGG" id="aae:aq_aa25"/>
<dbReference type="PATRIC" id="fig|224324.8.peg.1741"/>
<dbReference type="eggNOG" id="ENOG5032FKI">
    <property type="taxonomic scope" value="Bacteria"/>
</dbReference>
<dbReference type="HOGENOM" id="CLU_106275_1_0_0"/>
<dbReference type="InParanoid" id="O66416"/>
<dbReference type="OrthoDB" id="9794849at2"/>
<dbReference type="Proteomes" id="UP000000798">
    <property type="component" value="Plasmid ece1"/>
</dbReference>
<dbReference type="Gene3D" id="3.10.450.620">
    <property type="entry name" value="JHP933, nucleotidyltransferase-like core domain"/>
    <property type="match status" value="1"/>
</dbReference>
<dbReference type="InterPro" id="IPR014942">
    <property type="entry name" value="AbiEii"/>
</dbReference>
<dbReference type="Pfam" id="PF08843">
    <property type="entry name" value="AbiEii"/>
    <property type="match status" value="2"/>
</dbReference>
<accession>O66416</accession>
<organism>
    <name type="scientific">Aquifex aeolicus (strain VF5)</name>
    <dbReference type="NCBI Taxonomy" id="224324"/>
    <lineage>
        <taxon>Bacteria</taxon>
        <taxon>Pseudomonadati</taxon>
        <taxon>Aquificota</taxon>
        <taxon>Aquificia</taxon>
        <taxon>Aquificales</taxon>
        <taxon>Aquificaceae</taxon>
        <taxon>Aquifex</taxon>
    </lineage>
</organism>
<reference key="1">
    <citation type="journal article" date="1998" name="Nature">
        <title>The complete genome of the hyperthermophilic bacterium Aquifex aeolicus.</title>
        <authorList>
            <person name="Deckert G."/>
            <person name="Warren P.V."/>
            <person name="Gaasterland T."/>
            <person name="Young W.G."/>
            <person name="Lenox A.L."/>
            <person name="Graham D.E."/>
            <person name="Overbeek R."/>
            <person name="Snead M.A."/>
            <person name="Keller M."/>
            <person name="Aujay M."/>
            <person name="Huber R."/>
            <person name="Feldman R.A."/>
            <person name="Short J.M."/>
            <person name="Olsen G.J."/>
            <person name="Swanson R.V."/>
        </authorList>
    </citation>
    <scope>NUCLEOTIDE SEQUENCE [LARGE SCALE GENOMIC DNA]</scope>
    <source>
        <strain>VF5</strain>
    </source>
</reference>